<accession>C1F8M5</accession>
<name>MURA_ACIC5</name>
<protein>
    <recommendedName>
        <fullName evidence="1">UDP-N-acetylglucosamine 1-carboxyvinyltransferase</fullName>
        <ecNumber evidence="1">2.5.1.7</ecNumber>
    </recommendedName>
    <alternativeName>
        <fullName evidence="1">Enoylpyruvate transferase</fullName>
    </alternativeName>
    <alternativeName>
        <fullName evidence="1">UDP-N-acetylglucosamine enolpyruvyl transferase</fullName>
        <shortName evidence="1">EPT</shortName>
    </alternativeName>
</protein>
<keyword id="KW-0131">Cell cycle</keyword>
<keyword id="KW-0132">Cell division</keyword>
<keyword id="KW-0133">Cell shape</keyword>
<keyword id="KW-0961">Cell wall biogenesis/degradation</keyword>
<keyword id="KW-0963">Cytoplasm</keyword>
<keyword id="KW-0573">Peptidoglycan synthesis</keyword>
<keyword id="KW-0670">Pyruvate</keyword>
<keyword id="KW-1185">Reference proteome</keyword>
<keyword id="KW-0808">Transferase</keyword>
<proteinExistence type="inferred from homology"/>
<gene>
    <name evidence="1" type="primary">murA</name>
    <name type="ordered locus">ACP_0153</name>
</gene>
<dbReference type="EC" id="2.5.1.7" evidence="1"/>
<dbReference type="EMBL" id="CP001472">
    <property type="protein sequence ID" value="ACO33518.1"/>
    <property type="molecule type" value="Genomic_DNA"/>
</dbReference>
<dbReference type="RefSeq" id="WP_012680557.1">
    <property type="nucleotide sequence ID" value="NC_012483.1"/>
</dbReference>
<dbReference type="SMR" id="C1F8M5"/>
<dbReference type="FunCoup" id="C1F8M5">
    <property type="interactions" value="444"/>
</dbReference>
<dbReference type="STRING" id="240015.ACP_0153"/>
<dbReference type="KEGG" id="aca:ACP_0153"/>
<dbReference type="eggNOG" id="COG0766">
    <property type="taxonomic scope" value="Bacteria"/>
</dbReference>
<dbReference type="HOGENOM" id="CLU_027387_0_0_0"/>
<dbReference type="InParanoid" id="C1F8M5"/>
<dbReference type="OrthoDB" id="9803760at2"/>
<dbReference type="UniPathway" id="UPA00219"/>
<dbReference type="Proteomes" id="UP000002207">
    <property type="component" value="Chromosome"/>
</dbReference>
<dbReference type="GO" id="GO:0005737">
    <property type="term" value="C:cytoplasm"/>
    <property type="evidence" value="ECO:0007669"/>
    <property type="project" value="UniProtKB-SubCell"/>
</dbReference>
<dbReference type="GO" id="GO:0008760">
    <property type="term" value="F:UDP-N-acetylglucosamine 1-carboxyvinyltransferase activity"/>
    <property type="evidence" value="ECO:0007669"/>
    <property type="project" value="UniProtKB-UniRule"/>
</dbReference>
<dbReference type="GO" id="GO:0051301">
    <property type="term" value="P:cell division"/>
    <property type="evidence" value="ECO:0007669"/>
    <property type="project" value="UniProtKB-KW"/>
</dbReference>
<dbReference type="GO" id="GO:0071555">
    <property type="term" value="P:cell wall organization"/>
    <property type="evidence" value="ECO:0007669"/>
    <property type="project" value="UniProtKB-KW"/>
</dbReference>
<dbReference type="GO" id="GO:0009252">
    <property type="term" value="P:peptidoglycan biosynthetic process"/>
    <property type="evidence" value="ECO:0007669"/>
    <property type="project" value="UniProtKB-UniRule"/>
</dbReference>
<dbReference type="GO" id="GO:0008360">
    <property type="term" value="P:regulation of cell shape"/>
    <property type="evidence" value="ECO:0007669"/>
    <property type="project" value="UniProtKB-KW"/>
</dbReference>
<dbReference type="GO" id="GO:0019277">
    <property type="term" value="P:UDP-N-acetylgalactosamine biosynthetic process"/>
    <property type="evidence" value="ECO:0007669"/>
    <property type="project" value="InterPro"/>
</dbReference>
<dbReference type="CDD" id="cd01555">
    <property type="entry name" value="UdpNAET"/>
    <property type="match status" value="1"/>
</dbReference>
<dbReference type="FunFam" id="3.65.10.10:FF:000001">
    <property type="entry name" value="UDP-N-acetylglucosamine 1-carboxyvinyltransferase"/>
    <property type="match status" value="1"/>
</dbReference>
<dbReference type="Gene3D" id="3.65.10.10">
    <property type="entry name" value="Enolpyruvate transferase domain"/>
    <property type="match status" value="2"/>
</dbReference>
<dbReference type="HAMAP" id="MF_00111">
    <property type="entry name" value="MurA"/>
    <property type="match status" value="1"/>
</dbReference>
<dbReference type="InterPro" id="IPR001986">
    <property type="entry name" value="Enolpyruvate_Tfrase_dom"/>
</dbReference>
<dbReference type="InterPro" id="IPR036968">
    <property type="entry name" value="Enolpyruvate_Tfrase_sf"/>
</dbReference>
<dbReference type="InterPro" id="IPR050068">
    <property type="entry name" value="MurA_subfamily"/>
</dbReference>
<dbReference type="InterPro" id="IPR013792">
    <property type="entry name" value="RNA3'P_cycl/enolpyr_Trfase_a/b"/>
</dbReference>
<dbReference type="InterPro" id="IPR005750">
    <property type="entry name" value="UDP_GlcNAc_COvinyl_MurA"/>
</dbReference>
<dbReference type="NCBIfam" id="TIGR01072">
    <property type="entry name" value="murA"/>
    <property type="match status" value="1"/>
</dbReference>
<dbReference type="NCBIfam" id="NF006873">
    <property type="entry name" value="PRK09369.1"/>
    <property type="match status" value="1"/>
</dbReference>
<dbReference type="PANTHER" id="PTHR43783">
    <property type="entry name" value="UDP-N-ACETYLGLUCOSAMINE 1-CARBOXYVINYLTRANSFERASE"/>
    <property type="match status" value="1"/>
</dbReference>
<dbReference type="PANTHER" id="PTHR43783:SF1">
    <property type="entry name" value="UDP-N-ACETYLGLUCOSAMINE 1-CARBOXYVINYLTRANSFERASE"/>
    <property type="match status" value="1"/>
</dbReference>
<dbReference type="Pfam" id="PF00275">
    <property type="entry name" value="EPSP_synthase"/>
    <property type="match status" value="1"/>
</dbReference>
<dbReference type="SUPFAM" id="SSF55205">
    <property type="entry name" value="EPT/RTPC-like"/>
    <property type="match status" value="1"/>
</dbReference>
<sequence>MDKFVIRGGNPLIGTVRVSGAKNSALPCMAAAILTEDEVILENIPQVRDIETERKLLTSMGAEVELGYGRAQHRTTISCRVLSDPTAKYEIVKTMRASALVLGPLVARTGLARVSMPGGCAIGARPIDLHIKGLEQMGATIVYEHGYIEARAERLKGAQIHFDKITVTGTEDLMMAAVLAEGETVLENAAREPEVTDLAALLTAMGAQIEGAGTSEIRIQGVEKLHGARHRINPDRIEAGTFLIAGAITGGDLCVSHCNPAHLGAVIAKLEEAGVRIDVLGKDSLRVRSEGHLKPIDVSTEEYPGFPTDMQAQYMALATQAEGTTLVKENIFENRFMHVQELVRMGANIKTAGRIASVRGKTPLSAAAVMCSDLRASASLVLAALVANGESILDRVYNIDRGYEHIEEKLRGVGAQIKRLGNVFNDKREAAQISAS</sequence>
<organism>
    <name type="scientific">Acidobacterium capsulatum (strain ATCC 51196 / DSM 11244 / BCRC 80197 / JCM 7670 / NBRC 15755 / NCIMB 13165 / 161)</name>
    <dbReference type="NCBI Taxonomy" id="240015"/>
    <lineage>
        <taxon>Bacteria</taxon>
        <taxon>Pseudomonadati</taxon>
        <taxon>Acidobacteriota</taxon>
        <taxon>Terriglobia</taxon>
        <taxon>Terriglobales</taxon>
        <taxon>Acidobacteriaceae</taxon>
        <taxon>Acidobacterium</taxon>
    </lineage>
</organism>
<reference key="1">
    <citation type="journal article" date="2009" name="Appl. Environ. Microbiol.">
        <title>Three genomes from the phylum Acidobacteria provide insight into the lifestyles of these microorganisms in soils.</title>
        <authorList>
            <person name="Ward N.L."/>
            <person name="Challacombe J.F."/>
            <person name="Janssen P.H."/>
            <person name="Henrissat B."/>
            <person name="Coutinho P.M."/>
            <person name="Wu M."/>
            <person name="Xie G."/>
            <person name="Haft D.H."/>
            <person name="Sait M."/>
            <person name="Badger J."/>
            <person name="Barabote R.D."/>
            <person name="Bradley B."/>
            <person name="Brettin T.S."/>
            <person name="Brinkac L.M."/>
            <person name="Bruce D."/>
            <person name="Creasy T."/>
            <person name="Daugherty S.C."/>
            <person name="Davidsen T.M."/>
            <person name="DeBoy R.T."/>
            <person name="Detter J.C."/>
            <person name="Dodson R.J."/>
            <person name="Durkin A.S."/>
            <person name="Ganapathy A."/>
            <person name="Gwinn-Giglio M."/>
            <person name="Han C.S."/>
            <person name="Khouri H."/>
            <person name="Kiss H."/>
            <person name="Kothari S.P."/>
            <person name="Madupu R."/>
            <person name="Nelson K.E."/>
            <person name="Nelson W.C."/>
            <person name="Paulsen I."/>
            <person name="Penn K."/>
            <person name="Ren Q."/>
            <person name="Rosovitz M.J."/>
            <person name="Selengut J.D."/>
            <person name="Shrivastava S."/>
            <person name="Sullivan S.A."/>
            <person name="Tapia R."/>
            <person name="Thompson L.S."/>
            <person name="Watkins K.L."/>
            <person name="Yang Q."/>
            <person name="Yu C."/>
            <person name="Zafar N."/>
            <person name="Zhou L."/>
            <person name="Kuske C.R."/>
        </authorList>
    </citation>
    <scope>NUCLEOTIDE SEQUENCE [LARGE SCALE GENOMIC DNA]</scope>
    <source>
        <strain>ATCC 51196 / DSM 11244 / BCRC 80197 / JCM 7670 / NBRC 15755 / NCIMB 13165 / 161</strain>
    </source>
</reference>
<evidence type="ECO:0000255" key="1">
    <source>
        <dbReference type="HAMAP-Rule" id="MF_00111"/>
    </source>
</evidence>
<feature type="chain" id="PRO_1000192071" description="UDP-N-acetylglucosamine 1-carboxyvinyltransferase">
    <location>
        <begin position="1"/>
        <end position="436"/>
    </location>
</feature>
<feature type="active site" description="Proton donor" evidence="1">
    <location>
        <position position="120"/>
    </location>
</feature>
<feature type="binding site" evidence="1">
    <location>
        <begin position="22"/>
        <end position="23"/>
    </location>
    <ligand>
        <name>phosphoenolpyruvate</name>
        <dbReference type="ChEBI" id="CHEBI:58702"/>
    </ligand>
</feature>
<feature type="binding site" evidence="1">
    <location>
        <position position="96"/>
    </location>
    <ligand>
        <name>UDP-N-acetyl-alpha-D-glucosamine</name>
        <dbReference type="ChEBI" id="CHEBI:57705"/>
    </ligand>
</feature>
<feature type="binding site" evidence="1">
    <location>
        <begin position="125"/>
        <end position="129"/>
    </location>
    <ligand>
        <name>UDP-N-acetyl-alpha-D-glucosamine</name>
        <dbReference type="ChEBI" id="CHEBI:57705"/>
    </ligand>
</feature>
<feature type="binding site" evidence="1">
    <location>
        <position position="309"/>
    </location>
    <ligand>
        <name>UDP-N-acetyl-alpha-D-glucosamine</name>
        <dbReference type="ChEBI" id="CHEBI:57705"/>
    </ligand>
</feature>
<feature type="binding site" evidence="1">
    <location>
        <position position="331"/>
    </location>
    <ligand>
        <name>UDP-N-acetyl-alpha-D-glucosamine</name>
        <dbReference type="ChEBI" id="CHEBI:57705"/>
    </ligand>
</feature>
<feature type="modified residue" description="2-(S-cysteinyl)pyruvic acid O-phosphothioketal" evidence="1">
    <location>
        <position position="120"/>
    </location>
</feature>
<comment type="function">
    <text evidence="1">Cell wall formation. Adds enolpyruvyl to UDP-N-acetylglucosamine.</text>
</comment>
<comment type="catalytic activity">
    <reaction evidence="1">
        <text>phosphoenolpyruvate + UDP-N-acetyl-alpha-D-glucosamine = UDP-N-acetyl-3-O-(1-carboxyvinyl)-alpha-D-glucosamine + phosphate</text>
        <dbReference type="Rhea" id="RHEA:18681"/>
        <dbReference type="ChEBI" id="CHEBI:43474"/>
        <dbReference type="ChEBI" id="CHEBI:57705"/>
        <dbReference type="ChEBI" id="CHEBI:58702"/>
        <dbReference type="ChEBI" id="CHEBI:68483"/>
        <dbReference type="EC" id="2.5.1.7"/>
    </reaction>
</comment>
<comment type="pathway">
    <text evidence="1">Cell wall biogenesis; peptidoglycan biosynthesis.</text>
</comment>
<comment type="subcellular location">
    <subcellularLocation>
        <location evidence="1">Cytoplasm</location>
    </subcellularLocation>
</comment>
<comment type="similarity">
    <text evidence="1">Belongs to the EPSP synthase family. MurA subfamily.</text>
</comment>